<organism>
    <name type="scientific">Pseudomonas putida</name>
    <name type="common">Arthrobacter siderocapsulatus</name>
    <dbReference type="NCBI Taxonomy" id="303"/>
    <lineage>
        <taxon>Bacteria</taxon>
        <taxon>Pseudomonadati</taxon>
        <taxon>Pseudomonadota</taxon>
        <taxon>Gammaproteobacteria</taxon>
        <taxon>Pseudomonadales</taxon>
        <taxon>Pseudomonadaceae</taxon>
        <taxon>Pseudomonas</taxon>
    </lineage>
</organism>
<feature type="chain" id="PRO_0000079344" description="Creatinase">
    <location>
        <begin position="1"/>
        <end position="403"/>
    </location>
</feature>
<feature type="active site">
    <location>
        <position position="232"/>
    </location>
</feature>
<feature type="strand" evidence="2">
    <location>
        <begin position="5"/>
        <end position="7"/>
    </location>
</feature>
<feature type="helix" evidence="2">
    <location>
        <begin position="21"/>
        <end position="37"/>
    </location>
</feature>
<feature type="strand" evidence="2">
    <location>
        <begin position="41"/>
        <end position="45"/>
    </location>
</feature>
<feature type="helix" evidence="2">
    <location>
        <begin position="48"/>
        <end position="55"/>
    </location>
</feature>
<feature type="strand" evidence="2">
    <location>
        <begin position="67"/>
        <end position="70"/>
    </location>
</feature>
<feature type="strand" evidence="2">
    <location>
        <begin position="75"/>
        <end position="80"/>
    </location>
</feature>
<feature type="helix" evidence="2">
    <location>
        <begin position="81"/>
        <end position="83"/>
    </location>
</feature>
<feature type="helix" evidence="2">
    <location>
        <begin position="86"/>
        <end position="90"/>
    </location>
</feature>
<feature type="strand" evidence="2">
    <location>
        <begin position="93"/>
        <end position="99"/>
    </location>
</feature>
<feature type="helix" evidence="2">
    <location>
        <begin position="106"/>
        <end position="114"/>
    </location>
</feature>
<feature type="strand" evidence="2">
    <location>
        <begin position="119"/>
        <end position="123"/>
    </location>
</feature>
<feature type="turn" evidence="2">
    <location>
        <begin position="125"/>
        <end position="127"/>
    </location>
</feature>
<feature type="helix" evidence="2">
    <location>
        <begin position="130"/>
        <end position="139"/>
    </location>
</feature>
<feature type="strand" evidence="2">
    <location>
        <begin position="144"/>
        <end position="147"/>
    </location>
</feature>
<feature type="helix" evidence="2">
    <location>
        <begin position="149"/>
        <end position="156"/>
    </location>
</feature>
<feature type="helix" evidence="2">
    <location>
        <begin position="161"/>
        <end position="184"/>
    </location>
</feature>
<feature type="helix" evidence="2">
    <location>
        <begin position="191"/>
        <end position="209"/>
    </location>
</feature>
<feature type="strand" evidence="2">
    <location>
        <begin position="219"/>
        <end position="224"/>
    </location>
</feature>
<feature type="helix" evidence="2">
    <location>
        <begin position="225"/>
        <end position="229"/>
    </location>
</feature>
<feature type="strand" evidence="2">
    <location>
        <begin position="235"/>
        <end position="237"/>
    </location>
</feature>
<feature type="strand" evidence="2">
    <location>
        <begin position="245"/>
        <end position="251"/>
    </location>
</feature>
<feature type="strand" evidence="2">
    <location>
        <begin position="261"/>
        <end position="268"/>
    </location>
</feature>
<feature type="helix" evidence="2">
    <location>
        <begin position="272"/>
        <end position="291"/>
    </location>
</feature>
<feature type="helix" evidence="2">
    <location>
        <begin position="298"/>
        <end position="311"/>
    </location>
</feature>
<feature type="helix" evidence="2">
    <location>
        <begin position="315"/>
        <end position="317"/>
    </location>
</feature>
<feature type="strand" evidence="2">
    <location>
        <begin position="327"/>
        <end position="330"/>
    </location>
</feature>
<feature type="strand" evidence="2">
    <location>
        <begin position="354"/>
        <end position="357"/>
    </location>
</feature>
<feature type="strand" evidence="2">
    <location>
        <begin position="360"/>
        <end position="363"/>
    </location>
</feature>
<feature type="strand" evidence="2">
    <location>
        <begin position="371"/>
        <end position="374"/>
    </location>
</feature>
<feature type="strand" evidence="2">
    <location>
        <begin position="376"/>
        <end position="382"/>
    </location>
</feature>
<feature type="strand" evidence="2">
    <location>
        <begin position="385"/>
        <end position="388"/>
    </location>
</feature>
<feature type="helix" evidence="2">
    <location>
        <begin position="396"/>
        <end position="399"/>
    </location>
</feature>
<comment type="catalytic activity">
    <reaction>
        <text>creatine + H2O = sarcosine + urea</text>
        <dbReference type="Rhea" id="RHEA:22456"/>
        <dbReference type="ChEBI" id="CHEBI:15377"/>
        <dbReference type="ChEBI" id="CHEBI:16199"/>
        <dbReference type="ChEBI" id="CHEBI:57433"/>
        <dbReference type="ChEBI" id="CHEBI:57947"/>
        <dbReference type="EC" id="3.5.3.3"/>
    </reaction>
</comment>
<comment type="subunit">
    <text>Homodimer.</text>
</comment>
<comment type="domain">
    <text>Each monomer has two clearly defined domains. The small N-terminal domain (AA 1-161) and the large domain (AA 162-403). Each of the two active sites is made by residues of the large domain of one monomer and some residues of the small domain of the other monomer.</text>
</comment>
<comment type="similarity">
    <text evidence="1">Belongs to the peptidase M24 family. Creatinase subfamily.</text>
</comment>
<sequence>MQMPKTLRIRNGDKVRSTFSAQEYANRQARLRAHLAAENIDAAIFTSYHNINYYSDFLYCSFGRPYALVVTEDDVISISANIDGGQPWRRTVGTDNIVYTDWQRDNYFAAIQQALPKARRIGIEHDHLNLQNRDKLAARYPDAELVDVAAACMRMRMIKSAEEHVMIRHGARIADIGGAAVVEALGDQVPEYEVALHATQAMVRAIADTFEDVELMDTWTWFQSGINTDGAHNPVTTRKVNKGDILSLNCFPMIAGYYTALERTLFLDHCSDDHLRLWQVNVEVHEAGLKLIKPGARCSDIARELNEIFLKHDVLQYRTFGYGHSFGTLSHYYGREAGLELREDIDTVLEPGMVVSMEPMIMLPEGLPGAGGYREHDILIVNENGAENITKFPYGPEKNIIRK</sequence>
<name>CREA_PSEPU</name>
<keyword id="KW-0002">3D-structure</keyword>
<keyword id="KW-0378">Hydrolase</keyword>
<reference key="1">
    <citation type="journal article" date="1990" name="J. Mol. Biol.">
        <title>Enzymatic mechanism of creatine amidinohydrolase as deduced from crystal structures.</title>
        <authorList>
            <person name="Coll M."/>
            <person name="Knof S.H."/>
            <person name="Ohga Y."/>
            <person name="Messerschmidt A."/>
            <person name="Huber R."/>
            <person name="Moellering H."/>
            <person name="Ruessmann L."/>
            <person name="Schumacher G."/>
        </authorList>
    </citation>
    <scope>X-RAY CRYSTALLOGRAPHY (1.9 ANGSTROMS)</scope>
</reference>
<reference key="2">
    <citation type="journal article" date="1988" name="J. Mol. Biol.">
        <title>Crystal structure determination, refinement and molecular model of creatine amidinohydrolase from Pseudomonas putida.</title>
        <authorList>
            <person name="Hoeffken H.W."/>
            <person name="Knof S.H."/>
            <person name="Bartlett P.A."/>
            <person name="Huber R."/>
            <person name="Moellering H."/>
            <person name="Schumacher G."/>
        </authorList>
    </citation>
    <scope>X-RAY CRYSTALLOGRAPHY (1.9 ANGSTROMS)</scope>
</reference>
<dbReference type="EC" id="3.5.3.3"/>
<dbReference type="PDB" id="1CHM">
    <property type="method" value="X-ray"/>
    <property type="resolution" value="1.90 A"/>
    <property type="chains" value="A/B=2-402"/>
</dbReference>
<dbReference type="PDBsum" id="1CHM"/>
<dbReference type="SMR" id="P38488"/>
<dbReference type="BRENDA" id="3.5.3.3">
    <property type="organism ID" value="5092"/>
</dbReference>
<dbReference type="EvolutionaryTrace" id="P38488"/>
<dbReference type="GO" id="GO:0016980">
    <property type="term" value="F:creatinase activity"/>
    <property type="evidence" value="ECO:0007669"/>
    <property type="project" value="UniProtKB-EC"/>
</dbReference>
<dbReference type="CDD" id="cd01090">
    <property type="entry name" value="Creatinase"/>
    <property type="match status" value="1"/>
</dbReference>
<dbReference type="Gene3D" id="3.90.230.10">
    <property type="entry name" value="Creatinase/methionine aminopeptidase superfamily"/>
    <property type="match status" value="1"/>
</dbReference>
<dbReference type="Gene3D" id="3.40.350.10">
    <property type="entry name" value="Creatinase/prolidase N-terminal domain"/>
    <property type="match status" value="1"/>
</dbReference>
<dbReference type="InterPro" id="IPR029149">
    <property type="entry name" value="Creatin/AminoP/Spt16_N"/>
</dbReference>
<dbReference type="InterPro" id="IPR036005">
    <property type="entry name" value="Creatinase/aminopeptidase-like"/>
</dbReference>
<dbReference type="InterPro" id="IPR039394">
    <property type="entry name" value="Creatinase_C"/>
</dbReference>
<dbReference type="InterPro" id="IPR000587">
    <property type="entry name" value="Creatinase_N"/>
</dbReference>
<dbReference type="InterPro" id="IPR000994">
    <property type="entry name" value="Pept_M24"/>
</dbReference>
<dbReference type="InterPro" id="IPR050659">
    <property type="entry name" value="Peptidase_M24B"/>
</dbReference>
<dbReference type="PANTHER" id="PTHR46112">
    <property type="entry name" value="AMINOPEPTIDASE"/>
    <property type="match status" value="1"/>
</dbReference>
<dbReference type="PANTHER" id="PTHR46112:SF2">
    <property type="entry name" value="XAA-PRO AMINOPEPTIDASE P-RELATED"/>
    <property type="match status" value="1"/>
</dbReference>
<dbReference type="Pfam" id="PF01321">
    <property type="entry name" value="Creatinase_N"/>
    <property type="match status" value="1"/>
</dbReference>
<dbReference type="Pfam" id="PF00557">
    <property type="entry name" value="Peptidase_M24"/>
    <property type="match status" value="1"/>
</dbReference>
<dbReference type="SUPFAM" id="SSF55920">
    <property type="entry name" value="Creatinase/aminopeptidase"/>
    <property type="match status" value="1"/>
</dbReference>
<dbReference type="SUPFAM" id="SSF53092">
    <property type="entry name" value="Creatinase/prolidase N-terminal domain"/>
    <property type="match status" value="1"/>
</dbReference>
<protein>
    <recommendedName>
        <fullName>Creatinase</fullName>
        <ecNumber>3.5.3.3</ecNumber>
    </recommendedName>
    <alternativeName>
        <fullName>Creatine amidinohydrolase</fullName>
    </alternativeName>
</protein>
<evidence type="ECO:0000305" key="1"/>
<evidence type="ECO:0007829" key="2">
    <source>
        <dbReference type="PDB" id="1CHM"/>
    </source>
</evidence>
<proteinExistence type="evidence at protein level"/>
<accession>P38488</accession>